<reference key="1">
    <citation type="journal article" date="2008" name="PLoS Genet.">
        <title>Genomic islands in the pathogenic filamentous fungus Aspergillus fumigatus.</title>
        <authorList>
            <person name="Fedorova N.D."/>
            <person name="Khaldi N."/>
            <person name="Joardar V.S."/>
            <person name="Maiti R."/>
            <person name="Amedeo P."/>
            <person name="Anderson M.J."/>
            <person name="Crabtree J."/>
            <person name="Silva J.C."/>
            <person name="Badger J.H."/>
            <person name="Albarraq A."/>
            <person name="Angiuoli S."/>
            <person name="Bussey H."/>
            <person name="Bowyer P."/>
            <person name="Cotty P.J."/>
            <person name="Dyer P.S."/>
            <person name="Egan A."/>
            <person name="Galens K."/>
            <person name="Fraser-Liggett C.M."/>
            <person name="Haas B.J."/>
            <person name="Inman J.M."/>
            <person name="Kent R."/>
            <person name="Lemieux S."/>
            <person name="Malavazi I."/>
            <person name="Orvis J."/>
            <person name="Roemer T."/>
            <person name="Ronning C.M."/>
            <person name="Sundaram J.P."/>
            <person name="Sutton G."/>
            <person name="Turner G."/>
            <person name="Venter J.C."/>
            <person name="White O.R."/>
            <person name="Whitty B.R."/>
            <person name="Youngman P."/>
            <person name="Wolfe K.H."/>
            <person name="Goldman G.H."/>
            <person name="Wortman J.R."/>
            <person name="Jiang B."/>
            <person name="Denning D.W."/>
            <person name="Nierman W.C."/>
        </authorList>
    </citation>
    <scope>NUCLEOTIDE SEQUENCE [LARGE SCALE GENOMIC DNA]</scope>
    <source>
        <strain>ATCC 1007 / CBS 513.65 / DSM 816 / NCTC 3887 / NRRL 1 / QM 1276 / 107</strain>
    </source>
</reference>
<comment type="function">
    <text evidence="1">Involved in the biogenesis of the 60S ribosomal subunit.</text>
</comment>
<comment type="subunit">
    <text evidence="1">Component of the pre-66S ribosomal particle.</text>
</comment>
<comment type="subcellular location">
    <subcellularLocation>
        <location evidence="1">Nucleus</location>
        <location evidence="1">Nucleolus</location>
    </subcellularLocation>
</comment>
<comment type="similarity">
    <text evidence="3">Belongs to the NOP16 family.</text>
</comment>
<gene>
    <name type="primary">nop16</name>
    <name type="ORF">ACLA_093440</name>
</gene>
<name>NOP16_ASPCL</name>
<protein>
    <recommendedName>
        <fullName>Nucleolar protein 16</fullName>
    </recommendedName>
</protein>
<organism>
    <name type="scientific">Aspergillus clavatus (strain ATCC 1007 / CBS 513.65 / DSM 816 / NCTC 3887 / NRRL 1 / QM 1276 / 107)</name>
    <dbReference type="NCBI Taxonomy" id="344612"/>
    <lineage>
        <taxon>Eukaryota</taxon>
        <taxon>Fungi</taxon>
        <taxon>Dikarya</taxon>
        <taxon>Ascomycota</taxon>
        <taxon>Pezizomycotina</taxon>
        <taxon>Eurotiomycetes</taxon>
        <taxon>Eurotiomycetidae</taxon>
        <taxon>Eurotiales</taxon>
        <taxon>Aspergillaceae</taxon>
        <taxon>Aspergillus</taxon>
        <taxon>Aspergillus subgen. Fumigati</taxon>
    </lineage>
</organism>
<evidence type="ECO:0000250" key="1"/>
<evidence type="ECO:0000256" key="2">
    <source>
        <dbReference type="SAM" id="MobiDB-lite"/>
    </source>
</evidence>
<evidence type="ECO:0000305" key="3"/>
<keyword id="KW-0539">Nucleus</keyword>
<keyword id="KW-1185">Reference proteome</keyword>
<keyword id="KW-0687">Ribonucleoprotein</keyword>
<keyword id="KW-0690">Ribosome biogenesis</keyword>
<keyword id="KW-0698">rRNA processing</keyword>
<accession>A1CFJ6</accession>
<proteinExistence type="inferred from homology"/>
<sequence length="241" mass="27051">MGRVLQKKKNRSSAPKQKPKRSGQLKSGKKKINVLGNAIIAENWDRKLTLTQNYCRLGLVHRLNAPSGGSEKRVTKDGSIEEVPEDSLHIKGSATASAKQAAMGETRVERDPETGKIIRVIHDDDEIVVGGRKLKKSNPLNDPLNDLSDDESAGIQSQPRSKSTSAIVQQLERQADQEGQAVKSKKPRHQSKREEEWITRLIERHGENYSAMARDRKLNPMQQSEGDLKRRIRKWKASHSA</sequence>
<dbReference type="EMBL" id="DS027052">
    <property type="protein sequence ID" value="EAW11645.1"/>
    <property type="molecule type" value="Genomic_DNA"/>
</dbReference>
<dbReference type="RefSeq" id="XP_001273071.1">
    <property type="nucleotide sequence ID" value="XM_001273070.1"/>
</dbReference>
<dbReference type="SMR" id="A1CFJ6"/>
<dbReference type="STRING" id="344612.A1CFJ6"/>
<dbReference type="EnsemblFungi" id="EAW11645">
    <property type="protein sequence ID" value="EAW11645"/>
    <property type="gene ID" value="ACLA_093440"/>
</dbReference>
<dbReference type="GeneID" id="4704892"/>
<dbReference type="KEGG" id="act:ACLA_093440"/>
<dbReference type="VEuPathDB" id="FungiDB:ACLA_093440"/>
<dbReference type="eggNOG" id="KOG4771">
    <property type="taxonomic scope" value="Eukaryota"/>
</dbReference>
<dbReference type="HOGENOM" id="CLU_078857_0_0_1"/>
<dbReference type="OMA" id="MQQTEAD"/>
<dbReference type="OrthoDB" id="285729at2759"/>
<dbReference type="Proteomes" id="UP000006701">
    <property type="component" value="Unassembled WGS sequence"/>
</dbReference>
<dbReference type="GO" id="GO:0005730">
    <property type="term" value="C:nucleolus"/>
    <property type="evidence" value="ECO:0007669"/>
    <property type="project" value="UniProtKB-SubCell"/>
</dbReference>
<dbReference type="GO" id="GO:0030687">
    <property type="term" value="C:preribosome, large subunit precursor"/>
    <property type="evidence" value="ECO:0007669"/>
    <property type="project" value="EnsemblFungi"/>
</dbReference>
<dbReference type="GO" id="GO:0042273">
    <property type="term" value="P:ribosomal large subunit biogenesis"/>
    <property type="evidence" value="ECO:0007669"/>
    <property type="project" value="EnsemblFungi"/>
</dbReference>
<dbReference type="GO" id="GO:0006364">
    <property type="term" value="P:rRNA processing"/>
    <property type="evidence" value="ECO:0007669"/>
    <property type="project" value="UniProtKB-KW"/>
</dbReference>
<dbReference type="InterPro" id="IPR019002">
    <property type="entry name" value="Ribosome_biogenesis_Nop16"/>
</dbReference>
<dbReference type="PANTHER" id="PTHR13243">
    <property type="entry name" value="HSPC111 PROTEIN-RELATED"/>
    <property type="match status" value="1"/>
</dbReference>
<dbReference type="PANTHER" id="PTHR13243:SF1">
    <property type="entry name" value="NUCLEOLAR PROTEIN 16"/>
    <property type="match status" value="1"/>
</dbReference>
<dbReference type="Pfam" id="PF09420">
    <property type="entry name" value="Nop16"/>
    <property type="match status" value="1"/>
</dbReference>
<feature type="chain" id="PRO_0000320366" description="Nucleolar protein 16">
    <location>
        <begin position="1"/>
        <end position="241"/>
    </location>
</feature>
<feature type="region of interest" description="Disordered" evidence="2">
    <location>
        <begin position="1"/>
        <end position="29"/>
    </location>
</feature>
<feature type="region of interest" description="Disordered" evidence="2">
    <location>
        <begin position="92"/>
        <end position="111"/>
    </location>
</feature>
<feature type="region of interest" description="Disordered" evidence="2">
    <location>
        <begin position="132"/>
        <end position="196"/>
    </location>
</feature>
<feature type="region of interest" description="Disordered" evidence="2">
    <location>
        <begin position="208"/>
        <end position="241"/>
    </location>
</feature>
<feature type="compositionally biased region" description="Low complexity" evidence="2">
    <location>
        <begin position="137"/>
        <end position="146"/>
    </location>
</feature>
<feature type="compositionally biased region" description="Polar residues" evidence="2">
    <location>
        <begin position="154"/>
        <end position="172"/>
    </location>
</feature>
<feature type="compositionally biased region" description="Basic and acidic residues" evidence="2">
    <location>
        <begin position="208"/>
        <end position="218"/>
    </location>
</feature>
<feature type="compositionally biased region" description="Basic residues" evidence="2">
    <location>
        <begin position="230"/>
        <end position="241"/>
    </location>
</feature>